<gene>
    <name evidence="1" type="primary">nuoN</name>
    <name type="ordered locus">Swoo_2872</name>
</gene>
<comment type="function">
    <text evidence="1">NDH-1 shuttles electrons from NADH, via FMN and iron-sulfur (Fe-S) centers, to quinones in the respiratory chain. The immediate electron acceptor for the enzyme in this species is believed to be ubiquinone. Couples the redox reaction to proton translocation (for every two electrons transferred, four hydrogen ions are translocated across the cytoplasmic membrane), and thus conserves the redox energy in a proton gradient.</text>
</comment>
<comment type="catalytic activity">
    <reaction evidence="1">
        <text>a quinone + NADH + 5 H(+)(in) = a quinol + NAD(+) + 4 H(+)(out)</text>
        <dbReference type="Rhea" id="RHEA:57888"/>
        <dbReference type="ChEBI" id="CHEBI:15378"/>
        <dbReference type="ChEBI" id="CHEBI:24646"/>
        <dbReference type="ChEBI" id="CHEBI:57540"/>
        <dbReference type="ChEBI" id="CHEBI:57945"/>
        <dbReference type="ChEBI" id="CHEBI:132124"/>
    </reaction>
</comment>
<comment type="subunit">
    <text evidence="1">NDH-1 is composed of 13 different subunits. Subunits NuoA, H, J, K, L, M, N constitute the membrane sector of the complex.</text>
</comment>
<comment type="subcellular location">
    <subcellularLocation>
        <location evidence="1">Cell inner membrane</location>
        <topology evidence="1">Multi-pass membrane protein</topology>
    </subcellularLocation>
</comment>
<comment type="similarity">
    <text evidence="1">Belongs to the complex I subunit 2 family.</text>
</comment>
<reference key="1">
    <citation type="submission" date="2008-02" db="EMBL/GenBank/DDBJ databases">
        <title>Complete sequence of Shewanella woodyi ATCC 51908.</title>
        <authorList>
            <consortium name="US DOE Joint Genome Institute"/>
            <person name="Copeland A."/>
            <person name="Lucas S."/>
            <person name="Lapidus A."/>
            <person name="Glavina del Rio T."/>
            <person name="Dalin E."/>
            <person name="Tice H."/>
            <person name="Bruce D."/>
            <person name="Goodwin L."/>
            <person name="Pitluck S."/>
            <person name="Sims D."/>
            <person name="Brettin T."/>
            <person name="Detter J.C."/>
            <person name="Han C."/>
            <person name="Kuske C.R."/>
            <person name="Schmutz J."/>
            <person name="Larimer F."/>
            <person name="Land M."/>
            <person name="Hauser L."/>
            <person name="Kyrpides N."/>
            <person name="Lykidis A."/>
            <person name="Zhao J.-S."/>
            <person name="Richardson P."/>
        </authorList>
    </citation>
    <scope>NUCLEOTIDE SEQUENCE [LARGE SCALE GENOMIC DNA]</scope>
    <source>
        <strain>ATCC 51908 / MS32</strain>
    </source>
</reference>
<protein>
    <recommendedName>
        <fullName evidence="1">NADH-quinone oxidoreductase subunit N</fullName>
        <ecNumber evidence="1">7.1.1.-</ecNumber>
    </recommendedName>
    <alternativeName>
        <fullName evidence="1">NADH dehydrogenase I subunit N</fullName>
    </alternativeName>
    <alternativeName>
        <fullName evidence="1">NDH-1 subunit N</fullName>
    </alternativeName>
</protein>
<organism>
    <name type="scientific">Shewanella woodyi (strain ATCC 51908 / MS32)</name>
    <dbReference type="NCBI Taxonomy" id="392500"/>
    <lineage>
        <taxon>Bacteria</taxon>
        <taxon>Pseudomonadati</taxon>
        <taxon>Pseudomonadota</taxon>
        <taxon>Gammaproteobacteria</taxon>
        <taxon>Alteromonadales</taxon>
        <taxon>Shewanellaceae</taxon>
        <taxon>Shewanella</taxon>
    </lineage>
</organism>
<dbReference type="EC" id="7.1.1.-" evidence="1"/>
<dbReference type="EMBL" id="CP000961">
    <property type="protein sequence ID" value="ACA87147.1"/>
    <property type="molecule type" value="Genomic_DNA"/>
</dbReference>
<dbReference type="RefSeq" id="WP_012325483.1">
    <property type="nucleotide sequence ID" value="NC_010506.1"/>
</dbReference>
<dbReference type="SMR" id="B1KJW0"/>
<dbReference type="STRING" id="392500.Swoo_2872"/>
<dbReference type="KEGG" id="swd:Swoo_2872"/>
<dbReference type="eggNOG" id="COG1007">
    <property type="taxonomic scope" value="Bacteria"/>
</dbReference>
<dbReference type="HOGENOM" id="CLU_007100_1_5_6"/>
<dbReference type="Proteomes" id="UP000002168">
    <property type="component" value="Chromosome"/>
</dbReference>
<dbReference type="GO" id="GO:0005886">
    <property type="term" value="C:plasma membrane"/>
    <property type="evidence" value="ECO:0007669"/>
    <property type="project" value="UniProtKB-SubCell"/>
</dbReference>
<dbReference type="GO" id="GO:0008137">
    <property type="term" value="F:NADH dehydrogenase (ubiquinone) activity"/>
    <property type="evidence" value="ECO:0007669"/>
    <property type="project" value="InterPro"/>
</dbReference>
<dbReference type="GO" id="GO:0050136">
    <property type="term" value="F:NADH:ubiquinone reductase (non-electrogenic) activity"/>
    <property type="evidence" value="ECO:0007669"/>
    <property type="project" value="UniProtKB-UniRule"/>
</dbReference>
<dbReference type="GO" id="GO:0048038">
    <property type="term" value="F:quinone binding"/>
    <property type="evidence" value="ECO:0007669"/>
    <property type="project" value="UniProtKB-KW"/>
</dbReference>
<dbReference type="GO" id="GO:0042773">
    <property type="term" value="P:ATP synthesis coupled electron transport"/>
    <property type="evidence" value="ECO:0007669"/>
    <property type="project" value="InterPro"/>
</dbReference>
<dbReference type="HAMAP" id="MF_00445">
    <property type="entry name" value="NDH1_NuoN_1"/>
    <property type="match status" value="1"/>
</dbReference>
<dbReference type="InterPro" id="IPR010096">
    <property type="entry name" value="NADH-Q_OxRdtase_suN/2"/>
</dbReference>
<dbReference type="InterPro" id="IPR001750">
    <property type="entry name" value="ND/Mrp_TM"/>
</dbReference>
<dbReference type="NCBIfam" id="TIGR01770">
    <property type="entry name" value="NDH_I_N"/>
    <property type="match status" value="1"/>
</dbReference>
<dbReference type="PANTHER" id="PTHR22773">
    <property type="entry name" value="NADH DEHYDROGENASE"/>
    <property type="match status" value="1"/>
</dbReference>
<dbReference type="Pfam" id="PF00361">
    <property type="entry name" value="Proton_antipo_M"/>
    <property type="match status" value="1"/>
</dbReference>
<name>NUON_SHEWM</name>
<evidence type="ECO:0000255" key="1">
    <source>
        <dbReference type="HAMAP-Rule" id="MF_00445"/>
    </source>
</evidence>
<keyword id="KW-0997">Cell inner membrane</keyword>
<keyword id="KW-1003">Cell membrane</keyword>
<keyword id="KW-0472">Membrane</keyword>
<keyword id="KW-0520">NAD</keyword>
<keyword id="KW-0874">Quinone</keyword>
<keyword id="KW-1185">Reference proteome</keyword>
<keyword id="KW-1278">Translocase</keyword>
<keyword id="KW-0812">Transmembrane</keyword>
<keyword id="KW-1133">Transmembrane helix</keyword>
<keyword id="KW-0813">Transport</keyword>
<keyword id="KW-0830">Ubiquinone</keyword>
<feature type="chain" id="PRO_0000391223" description="NADH-quinone oxidoreductase subunit N">
    <location>
        <begin position="1"/>
        <end position="473"/>
    </location>
</feature>
<feature type="transmembrane region" description="Helical" evidence="1">
    <location>
        <begin position="3"/>
        <end position="23"/>
    </location>
</feature>
<feature type="transmembrane region" description="Helical" evidence="1">
    <location>
        <begin position="30"/>
        <end position="50"/>
    </location>
</feature>
<feature type="transmembrane region" description="Helical" evidence="1">
    <location>
        <begin position="62"/>
        <end position="82"/>
    </location>
</feature>
<feature type="transmembrane region" description="Helical" evidence="1">
    <location>
        <begin position="99"/>
        <end position="119"/>
    </location>
</feature>
<feature type="transmembrane region" description="Helical" evidence="1">
    <location>
        <begin position="120"/>
        <end position="140"/>
    </location>
</feature>
<feature type="transmembrane region" description="Helical" evidence="1">
    <location>
        <begin position="153"/>
        <end position="173"/>
    </location>
</feature>
<feature type="transmembrane region" description="Helical" evidence="1">
    <location>
        <begin position="195"/>
        <end position="215"/>
    </location>
</feature>
<feature type="transmembrane region" description="Helical" evidence="1">
    <location>
        <begin position="230"/>
        <end position="252"/>
    </location>
</feature>
<feature type="transmembrane region" description="Helical" evidence="1">
    <location>
        <begin position="262"/>
        <end position="282"/>
    </location>
</feature>
<feature type="transmembrane region" description="Helical" evidence="1">
    <location>
        <begin position="291"/>
        <end position="311"/>
    </location>
</feature>
<feature type="transmembrane region" description="Helical" evidence="1">
    <location>
        <begin position="326"/>
        <end position="346"/>
    </location>
</feature>
<feature type="transmembrane region" description="Helical" evidence="1">
    <location>
        <begin position="368"/>
        <end position="388"/>
    </location>
</feature>
<feature type="transmembrane region" description="Helical" evidence="1">
    <location>
        <begin position="408"/>
        <end position="428"/>
    </location>
</feature>
<feature type="transmembrane region" description="Helical" evidence="1">
    <location>
        <begin position="444"/>
        <end position="464"/>
    </location>
</feature>
<proteinExistence type="inferred from homology"/>
<accession>B1KJW0</accession>
<sequence length="473" mass="51616">MSLHYLPAIIISIAILVLLLVIALKRNHQLAFYITGTGLCIACVSQCSLLSASHFSDELFTFSSMSGVLSVLLLGILIFLWLQLHTWLEKHEANHKEEFYLLLLLASLGALGMIVSEHFASFFLTLELMSLSFVGLIAYSHSQLSSQEAGVKYLILSAVASAFMLMGIAIVYLQTGNLSFQYLADNVNNTNPSSMLFTAGLIFILIGLLFKLSLVPCHLWVADIFEGAPLPTTALLSTVSKLASFVVLWKLFHLGNWQENQIVLTLIGVVAVASMLIGNLLALLQNSILRILAFSSISHFGYLLILLFLFNHNADLLDNPTFPLEALLFYLSAYLITLTGAFSILMKLEGGKSLEALTGLFWSKPLHAASLSIVMLSLAGIPLTLGFMGKFYLVTASVSYQVTWPLPFLVIASVIGLFFYLRVIMVMLSATQSPHSSPSTSGEVASLWFIILLIMGLGTFPALFADTIKSVVG</sequence>